<sequence>MTTAATPRLRIGVMGGTFDPIHNGHLVAASEVQQHLQLDEVIFVPTGQPWQKQTVTDGEHRYLMTVIATAANPRFTVSRVDIDRAGTTYTIDTLRDIRRTHPDAELFFITGADAIQQILGWKDVAELWDLAHFVAVTRPGHDLTESGLPHADVRLLEVPALAISSTDCRARVGRGFPVWYLVPDGVVQYISKHHLYRSPL</sequence>
<organism>
    <name type="scientific">Clavibacter sepedonicus</name>
    <name type="common">Clavibacter michiganensis subsp. sepedonicus</name>
    <dbReference type="NCBI Taxonomy" id="31964"/>
    <lineage>
        <taxon>Bacteria</taxon>
        <taxon>Bacillati</taxon>
        <taxon>Actinomycetota</taxon>
        <taxon>Actinomycetes</taxon>
        <taxon>Micrococcales</taxon>
        <taxon>Microbacteriaceae</taxon>
        <taxon>Clavibacter</taxon>
    </lineage>
</organism>
<comment type="function">
    <text evidence="1">Catalyzes the reversible adenylation of nicotinate mononucleotide (NaMN) to nicotinic acid adenine dinucleotide (NaAD).</text>
</comment>
<comment type="catalytic activity">
    <reaction evidence="1">
        <text>nicotinate beta-D-ribonucleotide + ATP + H(+) = deamido-NAD(+) + diphosphate</text>
        <dbReference type="Rhea" id="RHEA:22860"/>
        <dbReference type="ChEBI" id="CHEBI:15378"/>
        <dbReference type="ChEBI" id="CHEBI:30616"/>
        <dbReference type="ChEBI" id="CHEBI:33019"/>
        <dbReference type="ChEBI" id="CHEBI:57502"/>
        <dbReference type="ChEBI" id="CHEBI:58437"/>
        <dbReference type="EC" id="2.7.7.18"/>
    </reaction>
</comment>
<comment type="pathway">
    <text evidence="1">Cofactor biosynthesis; NAD(+) biosynthesis; deamido-NAD(+) from nicotinate D-ribonucleotide: step 1/1.</text>
</comment>
<comment type="similarity">
    <text evidence="1">Belongs to the NadD family.</text>
</comment>
<name>NADD_CLASE</name>
<accession>B0RDF9</accession>
<reference key="1">
    <citation type="journal article" date="2008" name="J. Bacteriol.">
        <title>Genome of the actinomycete plant pathogen Clavibacter michiganensis subsp. sepedonicus suggests recent niche adaptation.</title>
        <authorList>
            <person name="Bentley S.D."/>
            <person name="Corton C."/>
            <person name="Brown S.E."/>
            <person name="Barron A."/>
            <person name="Clark L."/>
            <person name="Doggett J."/>
            <person name="Harris B."/>
            <person name="Ormond D."/>
            <person name="Quail M.A."/>
            <person name="May G."/>
            <person name="Francis D."/>
            <person name="Knudson D."/>
            <person name="Parkhill J."/>
            <person name="Ishimaru C.A."/>
        </authorList>
    </citation>
    <scope>NUCLEOTIDE SEQUENCE [LARGE SCALE GENOMIC DNA]</scope>
    <source>
        <strain>ATCC 33113 / DSM 20744 / JCM 9667 / LMG 2889 / ICMP 2535 / C-1</strain>
    </source>
</reference>
<feature type="chain" id="PRO_1000078373" description="Probable nicotinate-nucleotide adenylyltransferase">
    <location>
        <begin position="1"/>
        <end position="200"/>
    </location>
</feature>
<keyword id="KW-0067">ATP-binding</keyword>
<keyword id="KW-0520">NAD</keyword>
<keyword id="KW-0547">Nucleotide-binding</keyword>
<keyword id="KW-0548">Nucleotidyltransferase</keyword>
<keyword id="KW-0662">Pyridine nucleotide biosynthesis</keyword>
<keyword id="KW-0808">Transferase</keyword>
<dbReference type="EC" id="2.7.7.18" evidence="1"/>
<dbReference type="EMBL" id="AM849034">
    <property type="protein sequence ID" value="CAQ01915.1"/>
    <property type="molecule type" value="Genomic_DNA"/>
</dbReference>
<dbReference type="RefSeq" id="WP_012299156.1">
    <property type="nucleotide sequence ID" value="NZ_MZMN01000003.1"/>
</dbReference>
<dbReference type="SMR" id="B0RDF9"/>
<dbReference type="STRING" id="31964.CMS1810"/>
<dbReference type="KEGG" id="cms:CMS1810"/>
<dbReference type="eggNOG" id="COG1057">
    <property type="taxonomic scope" value="Bacteria"/>
</dbReference>
<dbReference type="HOGENOM" id="CLU_069765_1_1_11"/>
<dbReference type="OrthoDB" id="5295945at2"/>
<dbReference type="UniPathway" id="UPA00253">
    <property type="reaction ID" value="UER00332"/>
</dbReference>
<dbReference type="Proteomes" id="UP000001318">
    <property type="component" value="Chromosome"/>
</dbReference>
<dbReference type="GO" id="GO:0005524">
    <property type="term" value="F:ATP binding"/>
    <property type="evidence" value="ECO:0007669"/>
    <property type="project" value="UniProtKB-KW"/>
</dbReference>
<dbReference type="GO" id="GO:0004515">
    <property type="term" value="F:nicotinate-nucleotide adenylyltransferase activity"/>
    <property type="evidence" value="ECO:0007669"/>
    <property type="project" value="UniProtKB-UniRule"/>
</dbReference>
<dbReference type="GO" id="GO:0009435">
    <property type="term" value="P:NAD biosynthetic process"/>
    <property type="evidence" value="ECO:0007669"/>
    <property type="project" value="UniProtKB-UniRule"/>
</dbReference>
<dbReference type="CDD" id="cd02165">
    <property type="entry name" value="NMNAT"/>
    <property type="match status" value="1"/>
</dbReference>
<dbReference type="FunFam" id="3.40.50.620:FF:000039">
    <property type="entry name" value="Probable nicotinate-nucleotide adenylyltransferase"/>
    <property type="match status" value="1"/>
</dbReference>
<dbReference type="Gene3D" id="3.40.50.620">
    <property type="entry name" value="HUPs"/>
    <property type="match status" value="1"/>
</dbReference>
<dbReference type="HAMAP" id="MF_00244">
    <property type="entry name" value="NaMN_adenylyltr"/>
    <property type="match status" value="1"/>
</dbReference>
<dbReference type="InterPro" id="IPR004821">
    <property type="entry name" value="Cyt_trans-like"/>
</dbReference>
<dbReference type="InterPro" id="IPR005248">
    <property type="entry name" value="NadD/NMNAT"/>
</dbReference>
<dbReference type="InterPro" id="IPR014729">
    <property type="entry name" value="Rossmann-like_a/b/a_fold"/>
</dbReference>
<dbReference type="NCBIfam" id="TIGR00125">
    <property type="entry name" value="cyt_tran_rel"/>
    <property type="match status" value="1"/>
</dbReference>
<dbReference type="NCBIfam" id="TIGR00482">
    <property type="entry name" value="nicotinate (nicotinamide) nucleotide adenylyltransferase"/>
    <property type="match status" value="1"/>
</dbReference>
<dbReference type="NCBIfam" id="NF000840">
    <property type="entry name" value="PRK00071.1-3"/>
    <property type="match status" value="1"/>
</dbReference>
<dbReference type="PANTHER" id="PTHR39321">
    <property type="entry name" value="NICOTINATE-NUCLEOTIDE ADENYLYLTRANSFERASE-RELATED"/>
    <property type="match status" value="1"/>
</dbReference>
<dbReference type="PANTHER" id="PTHR39321:SF3">
    <property type="entry name" value="PHOSPHOPANTETHEINE ADENYLYLTRANSFERASE"/>
    <property type="match status" value="1"/>
</dbReference>
<dbReference type="Pfam" id="PF01467">
    <property type="entry name" value="CTP_transf_like"/>
    <property type="match status" value="1"/>
</dbReference>
<dbReference type="SUPFAM" id="SSF52374">
    <property type="entry name" value="Nucleotidylyl transferase"/>
    <property type="match status" value="1"/>
</dbReference>
<protein>
    <recommendedName>
        <fullName evidence="1">Probable nicotinate-nucleotide adenylyltransferase</fullName>
        <ecNumber evidence="1">2.7.7.18</ecNumber>
    </recommendedName>
    <alternativeName>
        <fullName evidence="1">Deamido-NAD(+) diphosphorylase</fullName>
    </alternativeName>
    <alternativeName>
        <fullName evidence="1">Deamido-NAD(+) pyrophosphorylase</fullName>
    </alternativeName>
    <alternativeName>
        <fullName evidence="1">Nicotinate mononucleotide adenylyltransferase</fullName>
        <shortName evidence="1">NaMN adenylyltransferase</shortName>
    </alternativeName>
</protein>
<gene>
    <name evidence="1" type="primary">nadD</name>
    <name type="ordered locus">CMS1810</name>
</gene>
<proteinExistence type="inferred from homology"/>
<evidence type="ECO:0000255" key="1">
    <source>
        <dbReference type="HAMAP-Rule" id="MF_00244"/>
    </source>
</evidence>